<reference key="1">
    <citation type="submission" date="1998-10" db="EMBL/GenBank/DDBJ databases">
        <title>Phylogenetic analysis of Bignoniaceae using the cpDNA sequences of rbcL and ndhF.</title>
        <authorList>
            <person name="Spangler R.E."/>
            <person name="Olmstead R.G."/>
        </authorList>
    </citation>
    <scope>NUCLEOTIDE SEQUENCE [GENOMIC DNA]</scope>
</reference>
<accession>O98664</accession>
<dbReference type="EC" id="4.1.1.39" evidence="1"/>
<dbReference type="EMBL" id="AF102648">
    <property type="protein sequence ID" value="AAC72994.1"/>
    <property type="molecule type" value="Genomic_DNA"/>
</dbReference>
<dbReference type="SMR" id="O98664"/>
<dbReference type="GO" id="GO:0009507">
    <property type="term" value="C:chloroplast"/>
    <property type="evidence" value="ECO:0007669"/>
    <property type="project" value="UniProtKB-SubCell"/>
</dbReference>
<dbReference type="GO" id="GO:0000287">
    <property type="term" value="F:magnesium ion binding"/>
    <property type="evidence" value="ECO:0007669"/>
    <property type="project" value="InterPro"/>
</dbReference>
<dbReference type="GO" id="GO:0004497">
    <property type="term" value="F:monooxygenase activity"/>
    <property type="evidence" value="ECO:0007669"/>
    <property type="project" value="UniProtKB-KW"/>
</dbReference>
<dbReference type="GO" id="GO:0016984">
    <property type="term" value="F:ribulose-bisphosphate carboxylase activity"/>
    <property type="evidence" value="ECO:0007669"/>
    <property type="project" value="UniProtKB-EC"/>
</dbReference>
<dbReference type="GO" id="GO:0009853">
    <property type="term" value="P:photorespiration"/>
    <property type="evidence" value="ECO:0007669"/>
    <property type="project" value="UniProtKB-KW"/>
</dbReference>
<dbReference type="GO" id="GO:0019253">
    <property type="term" value="P:reductive pentose-phosphate cycle"/>
    <property type="evidence" value="ECO:0007669"/>
    <property type="project" value="UniProtKB-KW"/>
</dbReference>
<dbReference type="CDD" id="cd08212">
    <property type="entry name" value="RuBisCO_large_I"/>
    <property type="match status" value="1"/>
</dbReference>
<dbReference type="FunFam" id="3.20.20.110:FF:000001">
    <property type="entry name" value="Ribulose bisphosphate carboxylase large chain"/>
    <property type="match status" value="1"/>
</dbReference>
<dbReference type="FunFam" id="3.30.70.150:FF:000001">
    <property type="entry name" value="Ribulose bisphosphate carboxylase large chain"/>
    <property type="match status" value="1"/>
</dbReference>
<dbReference type="Gene3D" id="3.20.20.110">
    <property type="entry name" value="Ribulose bisphosphate carboxylase, large subunit, C-terminal domain"/>
    <property type="match status" value="1"/>
</dbReference>
<dbReference type="Gene3D" id="3.30.70.150">
    <property type="entry name" value="RuBisCO large subunit, N-terminal domain"/>
    <property type="match status" value="1"/>
</dbReference>
<dbReference type="HAMAP" id="MF_01338">
    <property type="entry name" value="RuBisCO_L_type1"/>
    <property type="match status" value="1"/>
</dbReference>
<dbReference type="InterPro" id="IPR033966">
    <property type="entry name" value="RuBisCO"/>
</dbReference>
<dbReference type="InterPro" id="IPR020878">
    <property type="entry name" value="RuBisCo_large_chain_AS"/>
</dbReference>
<dbReference type="InterPro" id="IPR000685">
    <property type="entry name" value="RuBisCO_lsu_C"/>
</dbReference>
<dbReference type="InterPro" id="IPR036376">
    <property type="entry name" value="RuBisCO_lsu_C_sf"/>
</dbReference>
<dbReference type="InterPro" id="IPR017443">
    <property type="entry name" value="RuBisCO_lsu_fd_N"/>
</dbReference>
<dbReference type="InterPro" id="IPR036422">
    <property type="entry name" value="RuBisCO_lsu_N_sf"/>
</dbReference>
<dbReference type="InterPro" id="IPR020888">
    <property type="entry name" value="RuBisCO_lsuI"/>
</dbReference>
<dbReference type="NCBIfam" id="NF003252">
    <property type="entry name" value="PRK04208.1"/>
    <property type="match status" value="1"/>
</dbReference>
<dbReference type="PANTHER" id="PTHR42704">
    <property type="entry name" value="RIBULOSE BISPHOSPHATE CARBOXYLASE"/>
    <property type="match status" value="1"/>
</dbReference>
<dbReference type="PANTHER" id="PTHR42704:SF15">
    <property type="entry name" value="RIBULOSE BISPHOSPHATE CARBOXYLASE LARGE CHAIN"/>
    <property type="match status" value="1"/>
</dbReference>
<dbReference type="Pfam" id="PF00016">
    <property type="entry name" value="RuBisCO_large"/>
    <property type="match status" value="1"/>
</dbReference>
<dbReference type="Pfam" id="PF02788">
    <property type="entry name" value="RuBisCO_large_N"/>
    <property type="match status" value="1"/>
</dbReference>
<dbReference type="SFLD" id="SFLDG01052">
    <property type="entry name" value="RuBisCO"/>
    <property type="match status" value="1"/>
</dbReference>
<dbReference type="SFLD" id="SFLDS00014">
    <property type="entry name" value="RuBisCO"/>
    <property type="match status" value="1"/>
</dbReference>
<dbReference type="SFLD" id="SFLDG00301">
    <property type="entry name" value="RuBisCO-like_proteins"/>
    <property type="match status" value="1"/>
</dbReference>
<dbReference type="SUPFAM" id="SSF51649">
    <property type="entry name" value="RuBisCo, C-terminal domain"/>
    <property type="match status" value="1"/>
</dbReference>
<dbReference type="SUPFAM" id="SSF54966">
    <property type="entry name" value="RuBisCO, large subunit, small (N-terminal) domain"/>
    <property type="match status" value="1"/>
</dbReference>
<dbReference type="PROSITE" id="PS00157">
    <property type="entry name" value="RUBISCO_LARGE"/>
    <property type="match status" value="1"/>
</dbReference>
<sequence>SVGFKAGVKEYKLTYYTPEYETKDTDILAAFRVTPQPGVPPEEAGAAVAAESSTGTWTTVWTDGLTSLDRYKGRCYHIEPVPGEADQYICYVAYPLDLFEEGSVTNMFTSIVGNVFGFKALRALRLEDLRIPTAYIKTFQGPPHGIQVERDKLNKYGRPLLGCTIKPKLGLSAKNYGRAVYECLRGGLDFTKDDENVNSQPFMRWRDRFLFCAEALYKAQAETGEIKGHYLNATAGTCEEMMKRAVFARELGVPIVMHDYLTGGFTANTSLAHYCRDNGLLLHIHRAMHAVIDRQKNHGMHFRVLAKALRMSGGDHIHAGTVVGKLEGERDITLGFVDLLRDDFIEKDRSRGIYFTQDWVSLPGVIPVASGGIHVWHMPALTEIFGDDSVLQFGGGTLGHPWGNAPGAVANRVALEACVKARNEGRDLAAEGNAIIREASKWSPQLAAACEVWKEIKFEFKAVDTLDPEK</sequence>
<organism>
    <name type="scientific">Kigelia africana</name>
    <name type="common">Sausage tree</name>
    <name type="synonym">Kigelia pinnata</name>
    <dbReference type="NCBI Taxonomy" id="70070"/>
    <lineage>
        <taxon>Eukaryota</taxon>
        <taxon>Viridiplantae</taxon>
        <taxon>Streptophyta</taxon>
        <taxon>Embryophyta</taxon>
        <taxon>Tracheophyta</taxon>
        <taxon>Spermatophyta</taxon>
        <taxon>Magnoliopsida</taxon>
        <taxon>eudicotyledons</taxon>
        <taxon>Gunneridae</taxon>
        <taxon>Pentapetalae</taxon>
        <taxon>asterids</taxon>
        <taxon>lamiids</taxon>
        <taxon>Lamiales</taxon>
        <taxon>Bignoniaceae</taxon>
        <taxon>Crescentiina</taxon>
        <taxon>paleotropical clade</taxon>
        <taxon>Kigelia</taxon>
    </lineage>
</organism>
<keyword id="KW-0113">Calvin cycle</keyword>
<keyword id="KW-0120">Carbon dioxide fixation</keyword>
<keyword id="KW-0150">Chloroplast</keyword>
<keyword id="KW-1015">Disulfide bond</keyword>
<keyword id="KW-0456">Lyase</keyword>
<keyword id="KW-0460">Magnesium</keyword>
<keyword id="KW-0479">Metal-binding</keyword>
<keyword id="KW-0488">Methylation</keyword>
<keyword id="KW-0503">Monooxygenase</keyword>
<keyword id="KW-0560">Oxidoreductase</keyword>
<keyword id="KW-0601">Photorespiration</keyword>
<keyword id="KW-0602">Photosynthesis</keyword>
<keyword id="KW-0934">Plastid</keyword>
<gene>
    <name evidence="1" type="primary">rbcL</name>
</gene>
<protein>
    <recommendedName>
        <fullName evidence="1">Ribulose bisphosphate carboxylase large chain</fullName>
        <shortName evidence="1">RuBisCO large subunit</shortName>
        <ecNumber evidence="1">4.1.1.39</ecNumber>
    </recommendedName>
</protein>
<comment type="function">
    <text evidence="1">RuBisCO catalyzes two reactions: the carboxylation of D-ribulose 1,5-bisphosphate, the primary event in carbon dioxide fixation, as well as the oxidative fragmentation of the pentose substrate in the photorespiration process. Both reactions occur simultaneously and in competition at the same active site.</text>
</comment>
<comment type="catalytic activity">
    <reaction evidence="1">
        <text>2 (2R)-3-phosphoglycerate + 2 H(+) = D-ribulose 1,5-bisphosphate + CO2 + H2O</text>
        <dbReference type="Rhea" id="RHEA:23124"/>
        <dbReference type="ChEBI" id="CHEBI:15377"/>
        <dbReference type="ChEBI" id="CHEBI:15378"/>
        <dbReference type="ChEBI" id="CHEBI:16526"/>
        <dbReference type="ChEBI" id="CHEBI:57870"/>
        <dbReference type="ChEBI" id="CHEBI:58272"/>
        <dbReference type="EC" id="4.1.1.39"/>
    </reaction>
</comment>
<comment type="catalytic activity">
    <reaction evidence="1">
        <text>D-ribulose 1,5-bisphosphate + O2 = 2-phosphoglycolate + (2R)-3-phosphoglycerate + 2 H(+)</text>
        <dbReference type="Rhea" id="RHEA:36631"/>
        <dbReference type="ChEBI" id="CHEBI:15378"/>
        <dbReference type="ChEBI" id="CHEBI:15379"/>
        <dbReference type="ChEBI" id="CHEBI:57870"/>
        <dbReference type="ChEBI" id="CHEBI:58033"/>
        <dbReference type="ChEBI" id="CHEBI:58272"/>
    </reaction>
</comment>
<comment type="cofactor">
    <cofactor evidence="1">
        <name>Mg(2+)</name>
        <dbReference type="ChEBI" id="CHEBI:18420"/>
    </cofactor>
    <text evidence="1">Binds 1 Mg(2+) ion per subunit.</text>
</comment>
<comment type="subunit">
    <text evidence="1">Heterohexadecamer of 8 large chains and 8 small chains; disulfide-linked. The disulfide link is formed within the large subunit homodimers.</text>
</comment>
<comment type="subcellular location">
    <subcellularLocation>
        <location>Plastid</location>
        <location>Chloroplast</location>
    </subcellularLocation>
</comment>
<comment type="PTM">
    <text evidence="1">The disulfide bond which can form in the large chain dimeric partners within the hexadecamer appears to be associated with oxidative stress and protein turnover.</text>
</comment>
<comment type="miscellaneous">
    <text evidence="1">The basic functional RuBisCO is composed of a large chain homodimer in a 'head-to-tail' conformation. In form I RuBisCO this homodimer is arranged in a barrel-like tetramer with the small subunits forming a tetrameric 'cap' on each end of the 'barrel'.</text>
</comment>
<comment type="similarity">
    <text evidence="1">Belongs to the RuBisCO large chain family. Type I subfamily.</text>
</comment>
<feature type="chain" id="PRO_0000062501" description="Ribulose bisphosphate carboxylase large chain">
    <location>
        <begin position="1" status="less than"/>
        <end position="470" status="greater than"/>
    </location>
</feature>
<feature type="active site" description="Proton acceptor" evidence="1">
    <location>
        <position position="166"/>
    </location>
</feature>
<feature type="active site" description="Proton acceptor" evidence="1">
    <location>
        <position position="285"/>
    </location>
</feature>
<feature type="binding site" description="in homodimeric partner" evidence="1">
    <location>
        <position position="114"/>
    </location>
    <ligand>
        <name>substrate</name>
    </ligand>
</feature>
<feature type="binding site" evidence="1">
    <location>
        <position position="164"/>
    </location>
    <ligand>
        <name>substrate</name>
    </ligand>
</feature>
<feature type="binding site" evidence="1">
    <location>
        <position position="168"/>
    </location>
    <ligand>
        <name>substrate</name>
    </ligand>
</feature>
<feature type="binding site" description="via carbamate group" evidence="1">
    <location>
        <position position="192"/>
    </location>
    <ligand>
        <name>Mg(2+)</name>
        <dbReference type="ChEBI" id="CHEBI:18420"/>
    </ligand>
</feature>
<feature type="binding site" evidence="1">
    <location>
        <position position="194"/>
    </location>
    <ligand>
        <name>Mg(2+)</name>
        <dbReference type="ChEBI" id="CHEBI:18420"/>
    </ligand>
</feature>
<feature type="binding site" evidence="1">
    <location>
        <position position="195"/>
    </location>
    <ligand>
        <name>Mg(2+)</name>
        <dbReference type="ChEBI" id="CHEBI:18420"/>
    </ligand>
</feature>
<feature type="binding site" evidence="1">
    <location>
        <position position="286"/>
    </location>
    <ligand>
        <name>substrate</name>
    </ligand>
</feature>
<feature type="binding site" evidence="1">
    <location>
        <position position="318"/>
    </location>
    <ligand>
        <name>substrate</name>
    </ligand>
</feature>
<feature type="binding site" evidence="1">
    <location>
        <position position="370"/>
    </location>
    <ligand>
        <name>substrate</name>
    </ligand>
</feature>
<feature type="site" description="Transition state stabilizer" evidence="1">
    <location>
        <position position="325"/>
    </location>
</feature>
<feature type="modified residue" description="N6,N6,N6-trimethyllysine" evidence="1">
    <location>
        <position position="5"/>
    </location>
</feature>
<feature type="modified residue" description="N6-carboxylysine" evidence="1">
    <location>
        <position position="192"/>
    </location>
</feature>
<feature type="disulfide bond" description="Interchain; in linked form" evidence="1">
    <location>
        <position position="238"/>
    </location>
</feature>
<feature type="non-terminal residue">
    <location>
        <position position="1"/>
    </location>
</feature>
<feature type="non-terminal residue">
    <location>
        <position position="470"/>
    </location>
</feature>
<geneLocation type="chloroplast"/>
<proteinExistence type="inferred from homology"/>
<name>RBL_KIGAF</name>
<evidence type="ECO:0000255" key="1">
    <source>
        <dbReference type="HAMAP-Rule" id="MF_01338"/>
    </source>
</evidence>